<sequence>MPRSLKKGPFIDLHLLKKVEKAVESGDKKPLRTWSRRSTIFPNMIGLTIAVHNGRQHVPVFVSDEMVGHKLGEFAPTRTYRGHAADKKAKKK</sequence>
<name>RS19_KLEP3</name>
<dbReference type="EMBL" id="CP000964">
    <property type="protein sequence ID" value="ACI10536.1"/>
    <property type="molecule type" value="Genomic_DNA"/>
</dbReference>
<dbReference type="SMR" id="B5XN98"/>
<dbReference type="KEGG" id="kpe:KPK_0403"/>
<dbReference type="HOGENOM" id="CLU_144911_0_1_6"/>
<dbReference type="Proteomes" id="UP000001734">
    <property type="component" value="Chromosome"/>
</dbReference>
<dbReference type="GO" id="GO:0005737">
    <property type="term" value="C:cytoplasm"/>
    <property type="evidence" value="ECO:0007669"/>
    <property type="project" value="UniProtKB-ARBA"/>
</dbReference>
<dbReference type="GO" id="GO:0015935">
    <property type="term" value="C:small ribosomal subunit"/>
    <property type="evidence" value="ECO:0007669"/>
    <property type="project" value="InterPro"/>
</dbReference>
<dbReference type="GO" id="GO:0019843">
    <property type="term" value="F:rRNA binding"/>
    <property type="evidence" value="ECO:0007669"/>
    <property type="project" value="UniProtKB-UniRule"/>
</dbReference>
<dbReference type="GO" id="GO:0003735">
    <property type="term" value="F:structural constituent of ribosome"/>
    <property type="evidence" value="ECO:0007669"/>
    <property type="project" value="InterPro"/>
</dbReference>
<dbReference type="GO" id="GO:0000028">
    <property type="term" value="P:ribosomal small subunit assembly"/>
    <property type="evidence" value="ECO:0007669"/>
    <property type="project" value="TreeGrafter"/>
</dbReference>
<dbReference type="GO" id="GO:0006412">
    <property type="term" value="P:translation"/>
    <property type="evidence" value="ECO:0007669"/>
    <property type="project" value="UniProtKB-UniRule"/>
</dbReference>
<dbReference type="FunFam" id="3.30.860.10:FF:000001">
    <property type="entry name" value="30S ribosomal protein S19"/>
    <property type="match status" value="1"/>
</dbReference>
<dbReference type="Gene3D" id="3.30.860.10">
    <property type="entry name" value="30s Ribosomal Protein S19, Chain A"/>
    <property type="match status" value="1"/>
</dbReference>
<dbReference type="HAMAP" id="MF_00531">
    <property type="entry name" value="Ribosomal_uS19"/>
    <property type="match status" value="1"/>
</dbReference>
<dbReference type="InterPro" id="IPR002222">
    <property type="entry name" value="Ribosomal_uS19"/>
</dbReference>
<dbReference type="InterPro" id="IPR005732">
    <property type="entry name" value="Ribosomal_uS19_bac-type"/>
</dbReference>
<dbReference type="InterPro" id="IPR020934">
    <property type="entry name" value="Ribosomal_uS19_CS"/>
</dbReference>
<dbReference type="InterPro" id="IPR023575">
    <property type="entry name" value="Ribosomal_uS19_SF"/>
</dbReference>
<dbReference type="NCBIfam" id="TIGR01050">
    <property type="entry name" value="rpsS_bact"/>
    <property type="match status" value="1"/>
</dbReference>
<dbReference type="PANTHER" id="PTHR11880">
    <property type="entry name" value="RIBOSOMAL PROTEIN S19P FAMILY MEMBER"/>
    <property type="match status" value="1"/>
</dbReference>
<dbReference type="PANTHER" id="PTHR11880:SF8">
    <property type="entry name" value="SMALL RIBOSOMAL SUBUNIT PROTEIN US19M"/>
    <property type="match status" value="1"/>
</dbReference>
<dbReference type="Pfam" id="PF00203">
    <property type="entry name" value="Ribosomal_S19"/>
    <property type="match status" value="1"/>
</dbReference>
<dbReference type="PIRSF" id="PIRSF002144">
    <property type="entry name" value="Ribosomal_S19"/>
    <property type="match status" value="1"/>
</dbReference>
<dbReference type="PRINTS" id="PR00975">
    <property type="entry name" value="RIBOSOMALS19"/>
</dbReference>
<dbReference type="SUPFAM" id="SSF54570">
    <property type="entry name" value="Ribosomal protein S19"/>
    <property type="match status" value="1"/>
</dbReference>
<dbReference type="PROSITE" id="PS00323">
    <property type="entry name" value="RIBOSOMAL_S19"/>
    <property type="match status" value="1"/>
</dbReference>
<keyword id="KW-0687">Ribonucleoprotein</keyword>
<keyword id="KW-0689">Ribosomal protein</keyword>
<keyword id="KW-0694">RNA-binding</keyword>
<keyword id="KW-0699">rRNA-binding</keyword>
<gene>
    <name evidence="1" type="primary">rpsS</name>
    <name type="ordered locus">KPK_0403</name>
</gene>
<reference key="1">
    <citation type="journal article" date="2008" name="PLoS Genet.">
        <title>Complete genome sequence of the N2-fixing broad host range endophyte Klebsiella pneumoniae 342 and virulence predictions verified in mice.</title>
        <authorList>
            <person name="Fouts D.E."/>
            <person name="Tyler H.L."/>
            <person name="DeBoy R.T."/>
            <person name="Daugherty S."/>
            <person name="Ren Q."/>
            <person name="Badger J.H."/>
            <person name="Durkin A.S."/>
            <person name="Huot H."/>
            <person name="Shrivastava S."/>
            <person name="Kothari S."/>
            <person name="Dodson R.J."/>
            <person name="Mohamoud Y."/>
            <person name="Khouri H."/>
            <person name="Roesch L.F.W."/>
            <person name="Krogfelt K.A."/>
            <person name="Struve C."/>
            <person name="Triplett E.W."/>
            <person name="Methe B.A."/>
        </authorList>
    </citation>
    <scope>NUCLEOTIDE SEQUENCE [LARGE SCALE GENOMIC DNA]</scope>
    <source>
        <strain>342</strain>
    </source>
</reference>
<accession>B5XN98</accession>
<organism>
    <name type="scientific">Klebsiella pneumoniae (strain 342)</name>
    <dbReference type="NCBI Taxonomy" id="507522"/>
    <lineage>
        <taxon>Bacteria</taxon>
        <taxon>Pseudomonadati</taxon>
        <taxon>Pseudomonadota</taxon>
        <taxon>Gammaproteobacteria</taxon>
        <taxon>Enterobacterales</taxon>
        <taxon>Enterobacteriaceae</taxon>
        <taxon>Klebsiella/Raoultella group</taxon>
        <taxon>Klebsiella</taxon>
        <taxon>Klebsiella pneumoniae complex</taxon>
    </lineage>
</organism>
<comment type="function">
    <text evidence="1">Protein S19 forms a complex with S13 that binds strongly to the 16S ribosomal RNA.</text>
</comment>
<comment type="similarity">
    <text evidence="1">Belongs to the universal ribosomal protein uS19 family.</text>
</comment>
<protein>
    <recommendedName>
        <fullName evidence="1">Small ribosomal subunit protein uS19</fullName>
    </recommendedName>
    <alternativeName>
        <fullName evidence="2">30S ribosomal protein S19</fullName>
    </alternativeName>
</protein>
<proteinExistence type="inferred from homology"/>
<feature type="chain" id="PRO_1000127990" description="Small ribosomal subunit protein uS19">
    <location>
        <begin position="1"/>
        <end position="92"/>
    </location>
</feature>
<evidence type="ECO:0000255" key="1">
    <source>
        <dbReference type="HAMAP-Rule" id="MF_00531"/>
    </source>
</evidence>
<evidence type="ECO:0000305" key="2"/>